<keyword id="KW-0004">4Fe-4S</keyword>
<keyword id="KW-0997">Cell inner membrane</keyword>
<keyword id="KW-1003">Cell membrane</keyword>
<keyword id="KW-0249">Electron transport</keyword>
<keyword id="KW-0408">Iron</keyword>
<keyword id="KW-0411">Iron-sulfur</keyword>
<keyword id="KW-0472">Membrane</keyword>
<keyword id="KW-0479">Metal-binding</keyword>
<keyword id="KW-0677">Repeat</keyword>
<keyword id="KW-1278">Translocase</keyword>
<keyword id="KW-0813">Transport</keyword>
<protein>
    <recommendedName>
        <fullName evidence="1">Ion-translocating oxidoreductase complex subunit B</fullName>
        <ecNumber evidence="1">7.-.-.-</ecNumber>
    </recommendedName>
    <alternativeName>
        <fullName evidence="1">Rnf electron transport complex subunit B</fullName>
    </alternativeName>
</protein>
<reference key="1">
    <citation type="submission" date="2009-03" db="EMBL/GenBank/DDBJ databases">
        <title>Complete genome sequence of Edwardsiella ictaluri 93-146.</title>
        <authorList>
            <person name="Williams M.L."/>
            <person name="Gillaspy A.F."/>
            <person name="Dyer D.W."/>
            <person name="Thune R.L."/>
            <person name="Waldbieser G.C."/>
            <person name="Schuster S.C."/>
            <person name="Gipson J."/>
            <person name="Zaitshik J."/>
            <person name="Landry C."/>
            <person name="Lawrence M.L."/>
        </authorList>
    </citation>
    <scope>NUCLEOTIDE SEQUENCE [LARGE SCALE GENOMIC DNA]</scope>
    <source>
        <strain>93-146</strain>
    </source>
</reference>
<accession>C5BDE6</accession>
<name>RNFB_EDWI9</name>
<feature type="chain" id="PRO_1000206299" description="Ion-translocating oxidoreductase complex subunit B">
    <location>
        <begin position="1"/>
        <end position="191"/>
    </location>
</feature>
<feature type="domain" description="4Fe-4S" evidence="1">
    <location>
        <begin position="32"/>
        <end position="90"/>
    </location>
</feature>
<feature type="domain" description="4Fe-4S ferredoxin-type 1" evidence="1">
    <location>
        <begin position="107"/>
        <end position="136"/>
    </location>
</feature>
<feature type="domain" description="4Fe-4S ferredoxin-type 2" evidence="1">
    <location>
        <begin position="137"/>
        <end position="166"/>
    </location>
</feature>
<feature type="region of interest" description="Hydrophobic" evidence="1">
    <location>
        <begin position="1"/>
        <end position="26"/>
    </location>
</feature>
<feature type="binding site" evidence="1">
    <location>
        <position position="49"/>
    </location>
    <ligand>
        <name>[4Fe-4S] cluster</name>
        <dbReference type="ChEBI" id="CHEBI:49883"/>
        <label>1</label>
    </ligand>
</feature>
<feature type="binding site" evidence="1">
    <location>
        <position position="52"/>
    </location>
    <ligand>
        <name>[4Fe-4S] cluster</name>
        <dbReference type="ChEBI" id="CHEBI:49883"/>
        <label>1</label>
    </ligand>
</feature>
<feature type="binding site" evidence="1">
    <location>
        <position position="57"/>
    </location>
    <ligand>
        <name>[4Fe-4S] cluster</name>
        <dbReference type="ChEBI" id="CHEBI:49883"/>
        <label>1</label>
    </ligand>
</feature>
<feature type="binding site" evidence="1">
    <location>
        <position position="73"/>
    </location>
    <ligand>
        <name>[4Fe-4S] cluster</name>
        <dbReference type="ChEBI" id="CHEBI:49883"/>
        <label>1</label>
    </ligand>
</feature>
<feature type="binding site" evidence="1">
    <location>
        <position position="116"/>
    </location>
    <ligand>
        <name>[4Fe-4S] cluster</name>
        <dbReference type="ChEBI" id="CHEBI:49883"/>
        <label>2</label>
    </ligand>
</feature>
<feature type="binding site" evidence="1">
    <location>
        <position position="119"/>
    </location>
    <ligand>
        <name>[4Fe-4S] cluster</name>
        <dbReference type="ChEBI" id="CHEBI:49883"/>
        <label>2</label>
    </ligand>
</feature>
<feature type="binding site" evidence="1">
    <location>
        <position position="122"/>
    </location>
    <ligand>
        <name>[4Fe-4S] cluster</name>
        <dbReference type="ChEBI" id="CHEBI:49883"/>
        <label>2</label>
    </ligand>
</feature>
<feature type="binding site" evidence="1">
    <location>
        <position position="126"/>
    </location>
    <ligand>
        <name>[4Fe-4S] cluster</name>
        <dbReference type="ChEBI" id="CHEBI:49883"/>
        <label>3</label>
    </ligand>
</feature>
<feature type="binding site" evidence="1">
    <location>
        <position position="146"/>
    </location>
    <ligand>
        <name>[4Fe-4S] cluster</name>
        <dbReference type="ChEBI" id="CHEBI:49883"/>
        <label>3</label>
    </ligand>
</feature>
<feature type="binding site" evidence="1">
    <location>
        <position position="149"/>
    </location>
    <ligand>
        <name>[4Fe-4S] cluster</name>
        <dbReference type="ChEBI" id="CHEBI:49883"/>
        <label>3</label>
    </ligand>
</feature>
<feature type="binding site" evidence="1">
    <location>
        <position position="152"/>
    </location>
    <ligand>
        <name>[4Fe-4S] cluster</name>
        <dbReference type="ChEBI" id="CHEBI:49883"/>
        <label>3</label>
    </ligand>
</feature>
<feature type="binding site" evidence="1">
    <location>
        <position position="156"/>
    </location>
    <ligand>
        <name>[4Fe-4S] cluster</name>
        <dbReference type="ChEBI" id="CHEBI:49883"/>
        <label>2</label>
    </ligand>
</feature>
<organism>
    <name type="scientific">Edwardsiella ictaluri (strain 93-146)</name>
    <dbReference type="NCBI Taxonomy" id="634503"/>
    <lineage>
        <taxon>Bacteria</taxon>
        <taxon>Pseudomonadati</taxon>
        <taxon>Pseudomonadota</taxon>
        <taxon>Gammaproteobacteria</taxon>
        <taxon>Enterobacterales</taxon>
        <taxon>Hafniaceae</taxon>
        <taxon>Edwardsiella</taxon>
    </lineage>
</organism>
<comment type="function">
    <text evidence="1">Part of a membrane-bound complex that couples electron transfer with translocation of ions across the membrane.</text>
</comment>
<comment type="cofactor">
    <cofactor evidence="1">
        <name>[4Fe-4S] cluster</name>
        <dbReference type="ChEBI" id="CHEBI:49883"/>
    </cofactor>
    <text evidence="1">Binds 3 [4Fe-4S] clusters.</text>
</comment>
<comment type="subunit">
    <text evidence="1">The complex is composed of six subunits: RnfA, RnfB, RnfC, RnfD, RnfE and RnfG.</text>
</comment>
<comment type="subcellular location">
    <subcellularLocation>
        <location evidence="1">Cell inner membrane</location>
    </subcellularLocation>
</comment>
<comment type="similarity">
    <text evidence="1">Belongs to the 4Fe4S bacterial-type ferredoxin family. RnfB subfamily.</text>
</comment>
<dbReference type="EC" id="7.-.-.-" evidence="1"/>
<dbReference type="EMBL" id="CP001600">
    <property type="protein sequence ID" value="ACR69263.1"/>
    <property type="molecule type" value="Genomic_DNA"/>
</dbReference>
<dbReference type="STRING" id="67780.B6E78_03045"/>
<dbReference type="KEGG" id="eic:NT01EI_2087"/>
<dbReference type="PATRIC" id="fig|634503.3.peg.1863"/>
<dbReference type="HOGENOM" id="CLU_063448_2_0_6"/>
<dbReference type="OrthoDB" id="9789936at2"/>
<dbReference type="Proteomes" id="UP000001485">
    <property type="component" value="Chromosome"/>
</dbReference>
<dbReference type="GO" id="GO:0005886">
    <property type="term" value="C:plasma membrane"/>
    <property type="evidence" value="ECO:0007669"/>
    <property type="project" value="UniProtKB-SubCell"/>
</dbReference>
<dbReference type="GO" id="GO:0051539">
    <property type="term" value="F:4 iron, 4 sulfur cluster binding"/>
    <property type="evidence" value="ECO:0007669"/>
    <property type="project" value="UniProtKB-UniRule"/>
</dbReference>
<dbReference type="GO" id="GO:0009055">
    <property type="term" value="F:electron transfer activity"/>
    <property type="evidence" value="ECO:0007669"/>
    <property type="project" value="InterPro"/>
</dbReference>
<dbReference type="GO" id="GO:0046872">
    <property type="term" value="F:metal ion binding"/>
    <property type="evidence" value="ECO:0007669"/>
    <property type="project" value="UniProtKB-KW"/>
</dbReference>
<dbReference type="GO" id="GO:0022900">
    <property type="term" value="P:electron transport chain"/>
    <property type="evidence" value="ECO:0007669"/>
    <property type="project" value="UniProtKB-UniRule"/>
</dbReference>
<dbReference type="FunFam" id="1.10.15.40:FF:000001">
    <property type="entry name" value="Ion-translocating oxidoreductase complex subunit B"/>
    <property type="match status" value="1"/>
</dbReference>
<dbReference type="Gene3D" id="3.30.70.20">
    <property type="match status" value="1"/>
</dbReference>
<dbReference type="Gene3D" id="1.10.15.40">
    <property type="entry name" value="Electron transport complex subunit B, putative Fe-S cluster"/>
    <property type="match status" value="1"/>
</dbReference>
<dbReference type="HAMAP" id="MF_00463">
    <property type="entry name" value="RsxB_RnfB"/>
    <property type="match status" value="1"/>
</dbReference>
<dbReference type="InterPro" id="IPR007202">
    <property type="entry name" value="4Fe-4S_dom"/>
</dbReference>
<dbReference type="InterPro" id="IPR017896">
    <property type="entry name" value="4Fe4S_Fe-S-bd"/>
</dbReference>
<dbReference type="InterPro" id="IPR017900">
    <property type="entry name" value="4Fe4S_Fe_S_CS"/>
</dbReference>
<dbReference type="InterPro" id="IPR050395">
    <property type="entry name" value="4Fe4S_Ferredoxin_RnfB"/>
</dbReference>
<dbReference type="InterPro" id="IPR010207">
    <property type="entry name" value="Elect_transpt_cplx_RnfB/RsxB"/>
</dbReference>
<dbReference type="InterPro" id="IPR016463">
    <property type="entry name" value="RnfB/RsxB_Proteobac"/>
</dbReference>
<dbReference type="NCBIfam" id="NF003475">
    <property type="entry name" value="PRK05113.1"/>
    <property type="match status" value="1"/>
</dbReference>
<dbReference type="NCBIfam" id="TIGR01944">
    <property type="entry name" value="rnfB"/>
    <property type="match status" value="1"/>
</dbReference>
<dbReference type="PANTHER" id="PTHR43560">
    <property type="entry name" value="ION-TRANSLOCATING OXIDOREDUCTASE COMPLEX SUBUNIT B"/>
    <property type="match status" value="1"/>
</dbReference>
<dbReference type="PANTHER" id="PTHR43560:SF1">
    <property type="entry name" value="ION-TRANSLOCATING OXIDOREDUCTASE COMPLEX SUBUNIT B"/>
    <property type="match status" value="1"/>
</dbReference>
<dbReference type="Pfam" id="PF14697">
    <property type="entry name" value="Fer4_21"/>
    <property type="match status" value="1"/>
</dbReference>
<dbReference type="Pfam" id="PF04060">
    <property type="entry name" value="FeS"/>
    <property type="match status" value="1"/>
</dbReference>
<dbReference type="PIRSF" id="PIRSF005784">
    <property type="entry name" value="Elect_transpt_RnfB"/>
    <property type="match status" value="1"/>
</dbReference>
<dbReference type="SUPFAM" id="SSF54862">
    <property type="entry name" value="4Fe-4S ferredoxins"/>
    <property type="match status" value="1"/>
</dbReference>
<dbReference type="PROSITE" id="PS51656">
    <property type="entry name" value="4FE4S"/>
    <property type="match status" value="1"/>
</dbReference>
<dbReference type="PROSITE" id="PS00198">
    <property type="entry name" value="4FE4S_FER_1"/>
    <property type="match status" value="2"/>
</dbReference>
<dbReference type="PROSITE" id="PS51379">
    <property type="entry name" value="4FE4S_FER_2"/>
    <property type="match status" value="2"/>
</dbReference>
<gene>
    <name evidence="1" type="primary">rnfB</name>
    <name type="ordered locus">NT01EI_2087</name>
</gene>
<sequence length="191" mass="20198">MSSLWIAIAAVSAIALVSGLILGFAARRFQVEADPIVERIDALLPQSQCGQCGYPGCRPYAEAVANGEKINRCAPGGEAVMRNIAALLAVDPQPLEGDGVQSEPQRQVALIDEANCIGCTKCIQSCPVDAIVGATRALHTVISDQCTGCGLCLPPCPTSCIQLVPVPTTTATWKWNLQTIPVHILEVERHV</sequence>
<evidence type="ECO:0000255" key="1">
    <source>
        <dbReference type="HAMAP-Rule" id="MF_00463"/>
    </source>
</evidence>
<proteinExistence type="inferred from homology"/>